<dbReference type="EMBL" id="CP000237">
    <property type="protein sequence ID" value="ABD45878.1"/>
    <property type="molecule type" value="Genomic_DNA"/>
</dbReference>
<dbReference type="RefSeq" id="WP_011452173.1">
    <property type="nucleotide sequence ID" value="NC_007798.1"/>
</dbReference>
<dbReference type="SMR" id="Q2GCX9"/>
<dbReference type="STRING" id="222891.NSE_0792"/>
<dbReference type="KEGG" id="nse:NSE_0792"/>
<dbReference type="eggNOG" id="COG0268">
    <property type="taxonomic scope" value="Bacteria"/>
</dbReference>
<dbReference type="HOGENOM" id="CLU_160655_3_0_5"/>
<dbReference type="OrthoDB" id="9807974at2"/>
<dbReference type="Proteomes" id="UP000001942">
    <property type="component" value="Chromosome"/>
</dbReference>
<dbReference type="GO" id="GO:0015935">
    <property type="term" value="C:small ribosomal subunit"/>
    <property type="evidence" value="ECO:0007669"/>
    <property type="project" value="TreeGrafter"/>
</dbReference>
<dbReference type="GO" id="GO:0070181">
    <property type="term" value="F:small ribosomal subunit rRNA binding"/>
    <property type="evidence" value="ECO:0007669"/>
    <property type="project" value="TreeGrafter"/>
</dbReference>
<dbReference type="GO" id="GO:0003735">
    <property type="term" value="F:structural constituent of ribosome"/>
    <property type="evidence" value="ECO:0007669"/>
    <property type="project" value="InterPro"/>
</dbReference>
<dbReference type="GO" id="GO:0006412">
    <property type="term" value="P:translation"/>
    <property type="evidence" value="ECO:0007669"/>
    <property type="project" value="UniProtKB-UniRule"/>
</dbReference>
<dbReference type="Gene3D" id="1.20.58.110">
    <property type="entry name" value="Ribosomal protein S20"/>
    <property type="match status" value="1"/>
</dbReference>
<dbReference type="HAMAP" id="MF_00500">
    <property type="entry name" value="Ribosomal_bS20"/>
    <property type="match status" value="1"/>
</dbReference>
<dbReference type="InterPro" id="IPR002583">
    <property type="entry name" value="Ribosomal_bS20"/>
</dbReference>
<dbReference type="InterPro" id="IPR036510">
    <property type="entry name" value="Ribosomal_bS20_sf"/>
</dbReference>
<dbReference type="NCBIfam" id="TIGR00029">
    <property type="entry name" value="S20"/>
    <property type="match status" value="1"/>
</dbReference>
<dbReference type="PANTHER" id="PTHR33398">
    <property type="entry name" value="30S RIBOSOMAL PROTEIN S20"/>
    <property type="match status" value="1"/>
</dbReference>
<dbReference type="PANTHER" id="PTHR33398:SF1">
    <property type="entry name" value="SMALL RIBOSOMAL SUBUNIT PROTEIN BS20C"/>
    <property type="match status" value="1"/>
</dbReference>
<dbReference type="Pfam" id="PF01649">
    <property type="entry name" value="Ribosomal_S20p"/>
    <property type="match status" value="1"/>
</dbReference>
<dbReference type="SUPFAM" id="SSF46992">
    <property type="entry name" value="Ribosomal protein S20"/>
    <property type="match status" value="1"/>
</dbReference>
<comment type="function">
    <text evidence="1">Binds directly to 16S ribosomal RNA.</text>
</comment>
<comment type="similarity">
    <text evidence="1">Belongs to the bacterial ribosomal protein bS20 family.</text>
</comment>
<evidence type="ECO:0000255" key="1">
    <source>
        <dbReference type="HAMAP-Rule" id="MF_00500"/>
    </source>
</evidence>
<evidence type="ECO:0000305" key="2"/>
<protein>
    <recommendedName>
        <fullName evidence="1">Small ribosomal subunit protein bS20</fullName>
    </recommendedName>
    <alternativeName>
        <fullName evidence="2">30S ribosomal protein S20</fullName>
    </alternativeName>
</protein>
<keyword id="KW-0687">Ribonucleoprotein</keyword>
<keyword id="KW-0689">Ribosomal protein</keyword>
<keyword id="KW-0694">RNA-binding</keyword>
<keyword id="KW-0699">rRNA-binding</keyword>
<gene>
    <name evidence="1" type="primary">rpsT</name>
    <name type="ordered locus">NSE_0792</name>
</gene>
<name>RS20_NEOSM</name>
<accession>Q2GCX9</accession>
<sequence length="87" mass="9740">MANTASAKKMVRKIKRRTLVNKMRMSRIRTFVRKVRKAIAVGPKSAAAEALRVAQPEIHRGVTKGVLHKNRAARIVSRLSGHIKKMA</sequence>
<proteinExistence type="inferred from homology"/>
<reference key="1">
    <citation type="journal article" date="2006" name="PLoS Genet.">
        <title>Comparative genomics of emerging human ehrlichiosis agents.</title>
        <authorList>
            <person name="Dunning Hotopp J.C."/>
            <person name="Lin M."/>
            <person name="Madupu R."/>
            <person name="Crabtree J."/>
            <person name="Angiuoli S.V."/>
            <person name="Eisen J.A."/>
            <person name="Seshadri R."/>
            <person name="Ren Q."/>
            <person name="Wu M."/>
            <person name="Utterback T.R."/>
            <person name="Smith S."/>
            <person name="Lewis M."/>
            <person name="Khouri H."/>
            <person name="Zhang C."/>
            <person name="Niu H."/>
            <person name="Lin Q."/>
            <person name="Ohashi N."/>
            <person name="Zhi N."/>
            <person name="Nelson W.C."/>
            <person name="Brinkac L.M."/>
            <person name="Dodson R.J."/>
            <person name="Rosovitz M.J."/>
            <person name="Sundaram J.P."/>
            <person name="Daugherty S.C."/>
            <person name="Davidsen T."/>
            <person name="Durkin A.S."/>
            <person name="Gwinn M.L."/>
            <person name="Haft D.H."/>
            <person name="Selengut J.D."/>
            <person name="Sullivan S.A."/>
            <person name="Zafar N."/>
            <person name="Zhou L."/>
            <person name="Benahmed F."/>
            <person name="Forberger H."/>
            <person name="Halpin R."/>
            <person name="Mulligan S."/>
            <person name="Robinson J."/>
            <person name="White O."/>
            <person name="Rikihisa Y."/>
            <person name="Tettelin H."/>
        </authorList>
    </citation>
    <scope>NUCLEOTIDE SEQUENCE [LARGE SCALE GENOMIC DNA]</scope>
    <source>
        <strain>ATCC VR-367 / Miyayama</strain>
    </source>
</reference>
<feature type="chain" id="PRO_0000236442" description="Small ribosomal subunit protein bS20">
    <location>
        <begin position="1"/>
        <end position="87"/>
    </location>
</feature>
<organism>
    <name type="scientific">Neorickettsia sennetsu (strain ATCC VR-367 / Miyayama)</name>
    <name type="common">Ehrlichia sennetsu</name>
    <dbReference type="NCBI Taxonomy" id="222891"/>
    <lineage>
        <taxon>Bacteria</taxon>
        <taxon>Pseudomonadati</taxon>
        <taxon>Pseudomonadota</taxon>
        <taxon>Alphaproteobacteria</taxon>
        <taxon>Rickettsiales</taxon>
        <taxon>Anaplasmataceae</taxon>
        <taxon>Neorickettsia</taxon>
    </lineage>
</organism>